<accession>B1I477</accession>
<gene>
    <name evidence="1" type="primary">ruvA</name>
    <name type="ordered locus">Daud_1363</name>
</gene>
<organism>
    <name type="scientific">Desulforudis audaxviator (strain MP104C)</name>
    <dbReference type="NCBI Taxonomy" id="477974"/>
    <lineage>
        <taxon>Bacteria</taxon>
        <taxon>Bacillati</taxon>
        <taxon>Bacillota</taxon>
        <taxon>Clostridia</taxon>
        <taxon>Thermoanaerobacterales</taxon>
        <taxon>Candidatus Desulforudaceae</taxon>
        <taxon>Candidatus Desulforudis</taxon>
    </lineage>
</organism>
<sequence length="202" mass="21633">MIDFLKGRLVSVYPEAVVVEVGGIGYRVQVPPSLAASLPEPGETVFLYTYLSVKETALEMFGFSSELDRTAFLLLLGVAGIGPRTALAVVGRLGTRRLWAAILREDTGILTTVPGIGVKSARRIMVELRDRLEKQQVAVSAELPASDGVPVLAGRAENEALAALISLGYTPREAREALNRLPDRKLDAAGLVHAALRIMGSQ</sequence>
<reference key="1">
    <citation type="submission" date="2007-10" db="EMBL/GenBank/DDBJ databases">
        <title>Complete sequence of chromosome of Desulforudis audaxviator MP104C.</title>
        <authorList>
            <person name="Copeland A."/>
            <person name="Lucas S."/>
            <person name="Lapidus A."/>
            <person name="Barry K."/>
            <person name="Glavina del Rio T."/>
            <person name="Dalin E."/>
            <person name="Tice H."/>
            <person name="Bruce D."/>
            <person name="Pitluck S."/>
            <person name="Lowry S.R."/>
            <person name="Larimer F."/>
            <person name="Land M.L."/>
            <person name="Hauser L."/>
            <person name="Kyrpides N."/>
            <person name="Ivanova N.N."/>
            <person name="Richardson P."/>
        </authorList>
    </citation>
    <scope>NUCLEOTIDE SEQUENCE [LARGE SCALE GENOMIC DNA]</scope>
    <source>
        <strain>MP104C</strain>
    </source>
</reference>
<name>RUVA_DESAP</name>
<feature type="chain" id="PRO_1000090312" description="Holliday junction branch migration complex subunit RuvA">
    <location>
        <begin position="1"/>
        <end position="202"/>
    </location>
</feature>
<feature type="region of interest" description="Domain I" evidence="1">
    <location>
        <begin position="1"/>
        <end position="64"/>
    </location>
</feature>
<feature type="region of interest" description="Domain II" evidence="1">
    <location>
        <begin position="65"/>
        <end position="143"/>
    </location>
</feature>
<feature type="region of interest" description="Flexible linker" evidence="1">
    <location>
        <begin position="144"/>
        <end position="152"/>
    </location>
</feature>
<feature type="region of interest" description="Domain III" evidence="1">
    <location>
        <begin position="152"/>
        <end position="202"/>
    </location>
</feature>
<proteinExistence type="inferred from homology"/>
<evidence type="ECO:0000255" key="1">
    <source>
        <dbReference type="HAMAP-Rule" id="MF_00031"/>
    </source>
</evidence>
<dbReference type="EMBL" id="CP000860">
    <property type="protein sequence ID" value="ACA59872.1"/>
    <property type="molecule type" value="Genomic_DNA"/>
</dbReference>
<dbReference type="RefSeq" id="WP_012302457.1">
    <property type="nucleotide sequence ID" value="NC_010424.1"/>
</dbReference>
<dbReference type="SMR" id="B1I477"/>
<dbReference type="STRING" id="477974.Daud_1363"/>
<dbReference type="KEGG" id="dau:Daud_1363"/>
<dbReference type="eggNOG" id="COG0632">
    <property type="taxonomic scope" value="Bacteria"/>
</dbReference>
<dbReference type="HOGENOM" id="CLU_087936_3_0_9"/>
<dbReference type="Proteomes" id="UP000008544">
    <property type="component" value="Chromosome"/>
</dbReference>
<dbReference type="GO" id="GO:0005737">
    <property type="term" value="C:cytoplasm"/>
    <property type="evidence" value="ECO:0007669"/>
    <property type="project" value="UniProtKB-SubCell"/>
</dbReference>
<dbReference type="GO" id="GO:0009379">
    <property type="term" value="C:Holliday junction helicase complex"/>
    <property type="evidence" value="ECO:0007669"/>
    <property type="project" value="InterPro"/>
</dbReference>
<dbReference type="GO" id="GO:0048476">
    <property type="term" value="C:Holliday junction resolvase complex"/>
    <property type="evidence" value="ECO:0007669"/>
    <property type="project" value="UniProtKB-UniRule"/>
</dbReference>
<dbReference type="GO" id="GO:0005524">
    <property type="term" value="F:ATP binding"/>
    <property type="evidence" value="ECO:0007669"/>
    <property type="project" value="InterPro"/>
</dbReference>
<dbReference type="GO" id="GO:0000400">
    <property type="term" value="F:four-way junction DNA binding"/>
    <property type="evidence" value="ECO:0007669"/>
    <property type="project" value="UniProtKB-UniRule"/>
</dbReference>
<dbReference type="GO" id="GO:0009378">
    <property type="term" value="F:four-way junction helicase activity"/>
    <property type="evidence" value="ECO:0007669"/>
    <property type="project" value="InterPro"/>
</dbReference>
<dbReference type="GO" id="GO:0006310">
    <property type="term" value="P:DNA recombination"/>
    <property type="evidence" value="ECO:0007669"/>
    <property type="project" value="UniProtKB-UniRule"/>
</dbReference>
<dbReference type="GO" id="GO:0006281">
    <property type="term" value="P:DNA repair"/>
    <property type="evidence" value="ECO:0007669"/>
    <property type="project" value="UniProtKB-UniRule"/>
</dbReference>
<dbReference type="CDD" id="cd14332">
    <property type="entry name" value="UBA_RuvA_C"/>
    <property type="match status" value="1"/>
</dbReference>
<dbReference type="Gene3D" id="1.10.150.20">
    <property type="entry name" value="5' to 3' exonuclease, C-terminal subdomain"/>
    <property type="match status" value="1"/>
</dbReference>
<dbReference type="Gene3D" id="1.10.8.10">
    <property type="entry name" value="DNA helicase RuvA subunit, C-terminal domain"/>
    <property type="match status" value="1"/>
</dbReference>
<dbReference type="Gene3D" id="2.40.50.140">
    <property type="entry name" value="Nucleic acid-binding proteins"/>
    <property type="match status" value="1"/>
</dbReference>
<dbReference type="HAMAP" id="MF_00031">
    <property type="entry name" value="DNA_HJ_migration_RuvA"/>
    <property type="match status" value="1"/>
</dbReference>
<dbReference type="InterPro" id="IPR013849">
    <property type="entry name" value="DNA_helicase_Holl-junc_RuvA_I"/>
</dbReference>
<dbReference type="InterPro" id="IPR003583">
    <property type="entry name" value="Hlx-hairpin-Hlx_DNA-bd_motif"/>
</dbReference>
<dbReference type="InterPro" id="IPR012340">
    <property type="entry name" value="NA-bd_OB-fold"/>
</dbReference>
<dbReference type="InterPro" id="IPR000085">
    <property type="entry name" value="RuvA"/>
</dbReference>
<dbReference type="InterPro" id="IPR010994">
    <property type="entry name" value="RuvA_2-like"/>
</dbReference>
<dbReference type="InterPro" id="IPR011114">
    <property type="entry name" value="RuvA_C"/>
</dbReference>
<dbReference type="InterPro" id="IPR036267">
    <property type="entry name" value="RuvA_C_sf"/>
</dbReference>
<dbReference type="NCBIfam" id="TIGR00084">
    <property type="entry name" value="ruvA"/>
    <property type="match status" value="1"/>
</dbReference>
<dbReference type="Pfam" id="PF14520">
    <property type="entry name" value="HHH_5"/>
    <property type="match status" value="1"/>
</dbReference>
<dbReference type="Pfam" id="PF07499">
    <property type="entry name" value="RuvA_C"/>
    <property type="match status" value="1"/>
</dbReference>
<dbReference type="Pfam" id="PF01330">
    <property type="entry name" value="RuvA_N"/>
    <property type="match status" value="1"/>
</dbReference>
<dbReference type="SMART" id="SM00278">
    <property type="entry name" value="HhH1"/>
    <property type="match status" value="2"/>
</dbReference>
<dbReference type="SUPFAM" id="SSF46929">
    <property type="entry name" value="DNA helicase RuvA subunit, C-terminal domain"/>
    <property type="match status" value="1"/>
</dbReference>
<dbReference type="SUPFAM" id="SSF50249">
    <property type="entry name" value="Nucleic acid-binding proteins"/>
    <property type="match status" value="1"/>
</dbReference>
<dbReference type="SUPFAM" id="SSF47781">
    <property type="entry name" value="RuvA domain 2-like"/>
    <property type="match status" value="1"/>
</dbReference>
<comment type="function">
    <text evidence="1">The RuvA-RuvB-RuvC complex processes Holliday junction (HJ) DNA during genetic recombination and DNA repair, while the RuvA-RuvB complex plays an important role in the rescue of blocked DNA replication forks via replication fork reversal (RFR). RuvA specifically binds to HJ cruciform DNA, conferring on it an open structure. The RuvB hexamer acts as an ATP-dependent pump, pulling dsDNA into and through the RuvAB complex. HJ branch migration allows RuvC to scan DNA until it finds its consensus sequence, where it cleaves and resolves the cruciform DNA.</text>
</comment>
<comment type="subunit">
    <text evidence="1">Homotetramer. Forms an RuvA(8)-RuvB(12)-Holliday junction (HJ) complex. HJ DNA is sandwiched between 2 RuvA tetramers; dsDNA enters through RuvA and exits via RuvB. An RuvB hexamer assembles on each DNA strand where it exits the tetramer. Each RuvB hexamer is contacted by two RuvA subunits (via domain III) on 2 adjacent RuvB subunits; this complex drives branch migration. In the full resolvosome a probable DNA-RuvA(4)-RuvB(12)-RuvC(2) complex forms which resolves the HJ.</text>
</comment>
<comment type="subcellular location">
    <subcellularLocation>
        <location evidence="1">Cytoplasm</location>
    </subcellularLocation>
</comment>
<comment type="domain">
    <text evidence="1">Has three domains with a flexible linker between the domains II and III and assumes an 'L' shape. Domain III is highly mobile and contacts RuvB.</text>
</comment>
<comment type="similarity">
    <text evidence="1">Belongs to the RuvA family.</text>
</comment>
<keyword id="KW-0963">Cytoplasm</keyword>
<keyword id="KW-0227">DNA damage</keyword>
<keyword id="KW-0233">DNA recombination</keyword>
<keyword id="KW-0234">DNA repair</keyword>
<keyword id="KW-0238">DNA-binding</keyword>
<keyword id="KW-1185">Reference proteome</keyword>
<protein>
    <recommendedName>
        <fullName evidence="1">Holliday junction branch migration complex subunit RuvA</fullName>
    </recommendedName>
</protein>